<gene>
    <name evidence="1" type="primary">recR</name>
    <name type="ordered locus">SeHA_C0591</name>
</gene>
<proteinExistence type="inferred from homology"/>
<comment type="function">
    <text evidence="1">May play a role in DNA repair. It seems to be involved in an RecBC-independent recombinational process of DNA repair. It may act with RecF and RecO.</text>
</comment>
<comment type="similarity">
    <text evidence="1">Belongs to the RecR family.</text>
</comment>
<organism>
    <name type="scientific">Salmonella heidelberg (strain SL476)</name>
    <dbReference type="NCBI Taxonomy" id="454169"/>
    <lineage>
        <taxon>Bacteria</taxon>
        <taxon>Pseudomonadati</taxon>
        <taxon>Pseudomonadota</taxon>
        <taxon>Gammaproteobacteria</taxon>
        <taxon>Enterobacterales</taxon>
        <taxon>Enterobacteriaceae</taxon>
        <taxon>Salmonella</taxon>
    </lineage>
</organism>
<sequence>MQTSPLLTQLMEALRCLPGVGPKSAQRMAFTLLQRDRSGGMRLAQALTRAMSEIGHCADCRTFTEQDVCNICSNPRRQENGQICVVESPADIYAIEQTGQFSGRYFVLMGHLSPLDGIGPDDIGLDRLEQRLASEKISELILATNPTVEGEATANYIAELCAEAGVEASRIAHGVPVGGELEMVDGTTLSHSLAGRHKIIF</sequence>
<evidence type="ECO:0000255" key="1">
    <source>
        <dbReference type="HAMAP-Rule" id="MF_00017"/>
    </source>
</evidence>
<keyword id="KW-0227">DNA damage</keyword>
<keyword id="KW-0233">DNA recombination</keyword>
<keyword id="KW-0234">DNA repair</keyword>
<keyword id="KW-0479">Metal-binding</keyword>
<keyword id="KW-0862">Zinc</keyword>
<keyword id="KW-0863">Zinc-finger</keyword>
<reference key="1">
    <citation type="journal article" date="2011" name="J. Bacteriol.">
        <title>Comparative genomics of 28 Salmonella enterica isolates: evidence for CRISPR-mediated adaptive sublineage evolution.</title>
        <authorList>
            <person name="Fricke W.F."/>
            <person name="Mammel M.K."/>
            <person name="McDermott P.F."/>
            <person name="Tartera C."/>
            <person name="White D.G."/>
            <person name="Leclerc J.E."/>
            <person name="Ravel J."/>
            <person name="Cebula T.A."/>
        </authorList>
    </citation>
    <scope>NUCLEOTIDE SEQUENCE [LARGE SCALE GENOMIC DNA]</scope>
    <source>
        <strain>SL476</strain>
    </source>
</reference>
<protein>
    <recommendedName>
        <fullName evidence="1">Recombination protein RecR</fullName>
    </recommendedName>
</protein>
<accession>B4T9H9</accession>
<dbReference type="EMBL" id="CP001120">
    <property type="protein sequence ID" value="ACF67294.1"/>
    <property type="molecule type" value="Genomic_DNA"/>
</dbReference>
<dbReference type="RefSeq" id="WP_001195023.1">
    <property type="nucleotide sequence ID" value="NC_011083.1"/>
</dbReference>
<dbReference type="SMR" id="B4T9H9"/>
<dbReference type="KEGG" id="seh:SeHA_C0591"/>
<dbReference type="HOGENOM" id="CLU_060739_1_2_6"/>
<dbReference type="Proteomes" id="UP000001866">
    <property type="component" value="Chromosome"/>
</dbReference>
<dbReference type="GO" id="GO:0003677">
    <property type="term" value="F:DNA binding"/>
    <property type="evidence" value="ECO:0007669"/>
    <property type="project" value="UniProtKB-UniRule"/>
</dbReference>
<dbReference type="GO" id="GO:0008270">
    <property type="term" value="F:zinc ion binding"/>
    <property type="evidence" value="ECO:0007669"/>
    <property type="project" value="UniProtKB-KW"/>
</dbReference>
<dbReference type="GO" id="GO:0006310">
    <property type="term" value="P:DNA recombination"/>
    <property type="evidence" value="ECO:0007669"/>
    <property type="project" value="UniProtKB-UniRule"/>
</dbReference>
<dbReference type="GO" id="GO:0006281">
    <property type="term" value="P:DNA repair"/>
    <property type="evidence" value="ECO:0007669"/>
    <property type="project" value="UniProtKB-UniRule"/>
</dbReference>
<dbReference type="CDD" id="cd01025">
    <property type="entry name" value="TOPRIM_recR"/>
    <property type="match status" value="1"/>
</dbReference>
<dbReference type="FunFam" id="1.10.8.420:FF:000001">
    <property type="entry name" value="Recombination protein RecR"/>
    <property type="match status" value="1"/>
</dbReference>
<dbReference type="FunFam" id="3.40.1360.10:FF:000001">
    <property type="entry name" value="Recombination protein RecR"/>
    <property type="match status" value="1"/>
</dbReference>
<dbReference type="Gene3D" id="3.40.1360.10">
    <property type="match status" value="1"/>
</dbReference>
<dbReference type="Gene3D" id="6.10.250.240">
    <property type="match status" value="1"/>
</dbReference>
<dbReference type="Gene3D" id="1.10.8.420">
    <property type="entry name" value="RecR Domain 1"/>
    <property type="match status" value="1"/>
</dbReference>
<dbReference type="HAMAP" id="MF_00017">
    <property type="entry name" value="RecR"/>
    <property type="match status" value="1"/>
</dbReference>
<dbReference type="InterPro" id="IPR000093">
    <property type="entry name" value="DNA_Rcmb_RecR"/>
</dbReference>
<dbReference type="InterPro" id="IPR023627">
    <property type="entry name" value="Rcmb_RecR"/>
</dbReference>
<dbReference type="InterPro" id="IPR015967">
    <property type="entry name" value="Rcmb_RecR_Znf"/>
</dbReference>
<dbReference type="InterPro" id="IPR006171">
    <property type="entry name" value="TOPRIM_dom"/>
</dbReference>
<dbReference type="InterPro" id="IPR034137">
    <property type="entry name" value="TOPRIM_RecR"/>
</dbReference>
<dbReference type="NCBIfam" id="TIGR00615">
    <property type="entry name" value="recR"/>
    <property type="match status" value="1"/>
</dbReference>
<dbReference type="PANTHER" id="PTHR30446">
    <property type="entry name" value="RECOMBINATION PROTEIN RECR"/>
    <property type="match status" value="1"/>
</dbReference>
<dbReference type="PANTHER" id="PTHR30446:SF0">
    <property type="entry name" value="RECOMBINATION PROTEIN RECR"/>
    <property type="match status" value="1"/>
</dbReference>
<dbReference type="Pfam" id="PF21175">
    <property type="entry name" value="RecR_C"/>
    <property type="match status" value="1"/>
</dbReference>
<dbReference type="Pfam" id="PF21176">
    <property type="entry name" value="RecR_HhH"/>
    <property type="match status" value="1"/>
</dbReference>
<dbReference type="Pfam" id="PF02132">
    <property type="entry name" value="RecR_ZnF"/>
    <property type="match status" value="1"/>
</dbReference>
<dbReference type="Pfam" id="PF13662">
    <property type="entry name" value="Toprim_4"/>
    <property type="match status" value="1"/>
</dbReference>
<dbReference type="SMART" id="SM00493">
    <property type="entry name" value="TOPRIM"/>
    <property type="match status" value="1"/>
</dbReference>
<dbReference type="SUPFAM" id="SSF111304">
    <property type="entry name" value="Recombination protein RecR"/>
    <property type="match status" value="1"/>
</dbReference>
<dbReference type="PROSITE" id="PS01300">
    <property type="entry name" value="RECR"/>
    <property type="match status" value="1"/>
</dbReference>
<dbReference type="PROSITE" id="PS50880">
    <property type="entry name" value="TOPRIM"/>
    <property type="match status" value="1"/>
</dbReference>
<name>RECR_SALHS</name>
<feature type="chain" id="PRO_1000089766" description="Recombination protein RecR">
    <location>
        <begin position="1"/>
        <end position="201"/>
    </location>
</feature>
<feature type="domain" description="Toprim" evidence="1">
    <location>
        <begin position="81"/>
        <end position="176"/>
    </location>
</feature>
<feature type="zinc finger region" description="C4-type" evidence="1">
    <location>
        <begin position="57"/>
        <end position="72"/>
    </location>
</feature>